<protein>
    <recommendedName>
        <fullName evidence="6 7">L-asparaginase</fullName>
        <ecNumber evidence="3 4">3.5.1.1</ecNumber>
    </recommendedName>
    <alternativeName>
        <fullName evidence="6">L-asparagine amidohydrolase</fullName>
    </alternativeName>
    <alternativeName>
        <fullName evidence="8">TkA</fullName>
    </alternativeName>
    <alternativeName>
        <fullName evidence="7">TkAsn</fullName>
    </alternativeName>
</protein>
<dbReference type="EC" id="3.5.1.1" evidence="3 4"/>
<dbReference type="EMBL" id="AP006878">
    <property type="protein sequence ID" value="BAD85845.1"/>
    <property type="molecule type" value="Genomic_DNA"/>
</dbReference>
<dbReference type="RefSeq" id="WP_011250607.1">
    <property type="nucleotide sequence ID" value="NC_006624.1"/>
</dbReference>
<dbReference type="PDB" id="5OT0">
    <property type="method" value="X-ray"/>
    <property type="resolution" value="2.18 A"/>
    <property type="chains" value="A/B/C/D/E/F=1-328"/>
</dbReference>
<dbReference type="PDBsum" id="5OT0"/>
<dbReference type="SMR" id="Q5JIW4"/>
<dbReference type="STRING" id="69014.TK1656"/>
<dbReference type="EnsemblBacteria" id="BAD85845">
    <property type="protein sequence ID" value="BAD85845"/>
    <property type="gene ID" value="TK1656"/>
</dbReference>
<dbReference type="GeneID" id="78448184"/>
<dbReference type="KEGG" id="tko:TK1656"/>
<dbReference type="PATRIC" id="fig|69014.16.peg.1614"/>
<dbReference type="eggNOG" id="arCOG01924">
    <property type="taxonomic scope" value="Archaea"/>
</dbReference>
<dbReference type="HOGENOM" id="CLU_019134_2_3_2"/>
<dbReference type="InParanoid" id="Q5JIW4"/>
<dbReference type="OrthoDB" id="85706at2157"/>
<dbReference type="PhylomeDB" id="Q5JIW4"/>
<dbReference type="Proteomes" id="UP000000536">
    <property type="component" value="Chromosome"/>
</dbReference>
<dbReference type="GO" id="GO:0004067">
    <property type="term" value="F:asparaginase activity"/>
    <property type="evidence" value="ECO:0007669"/>
    <property type="project" value="UniProtKB-EC"/>
</dbReference>
<dbReference type="GO" id="GO:0006520">
    <property type="term" value="P:amino acid metabolic process"/>
    <property type="evidence" value="ECO:0007669"/>
    <property type="project" value="InterPro"/>
</dbReference>
<dbReference type="CDD" id="cd08963">
    <property type="entry name" value="L-asparaginase_I"/>
    <property type="match status" value="1"/>
</dbReference>
<dbReference type="FunFam" id="3.40.50.1170:FF:000001">
    <property type="entry name" value="L-asparaginase 2"/>
    <property type="match status" value="1"/>
</dbReference>
<dbReference type="Gene3D" id="3.40.50.40">
    <property type="match status" value="1"/>
</dbReference>
<dbReference type="Gene3D" id="3.40.50.1170">
    <property type="entry name" value="L-asparaginase, N-terminal domain"/>
    <property type="match status" value="1"/>
</dbReference>
<dbReference type="InterPro" id="IPR006033">
    <property type="entry name" value="AsnA_fam"/>
</dbReference>
<dbReference type="InterPro" id="IPR036152">
    <property type="entry name" value="Asp/glu_Ase-like_sf"/>
</dbReference>
<dbReference type="InterPro" id="IPR006034">
    <property type="entry name" value="Asparaginase/glutaminase-like"/>
</dbReference>
<dbReference type="InterPro" id="IPR020827">
    <property type="entry name" value="Asparaginase/glutaminase_AS1"/>
</dbReference>
<dbReference type="InterPro" id="IPR027475">
    <property type="entry name" value="Asparaginase/glutaminase_AS2"/>
</dbReference>
<dbReference type="InterPro" id="IPR040919">
    <property type="entry name" value="Asparaginase_C"/>
</dbReference>
<dbReference type="InterPro" id="IPR027473">
    <property type="entry name" value="L-asparaginase_C"/>
</dbReference>
<dbReference type="InterPro" id="IPR041725">
    <property type="entry name" value="L-asparaginase_I"/>
</dbReference>
<dbReference type="InterPro" id="IPR027474">
    <property type="entry name" value="L-asparaginase_N"/>
</dbReference>
<dbReference type="InterPro" id="IPR037152">
    <property type="entry name" value="L-asparaginase_N_sf"/>
</dbReference>
<dbReference type="NCBIfam" id="TIGR00519">
    <property type="entry name" value="asnASE_I"/>
    <property type="match status" value="1"/>
</dbReference>
<dbReference type="PANTHER" id="PTHR11707:SF28">
    <property type="entry name" value="60 KDA LYSOPHOSPHOLIPASE"/>
    <property type="match status" value="1"/>
</dbReference>
<dbReference type="PANTHER" id="PTHR11707">
    <property type="entry name" value="L-ASPARAGINASE"/>
    <property type="match status" value="1"/>
</dbReference>
<dbReference type="Pfam" id="PF00710">
    <property type="entry name" value="Asparaginase"/>
    <property type="match status" value="1"/>
</dbReference>
<dbReference type="Pfam" id="PF17763">
    <property type="entry name" value="Asparaginase_C"/>
    <property type="match status" value="1"/>
</dbReference>
<dbReference type="PIRSF" id="PIRSF001220">
    <property type="entry name" value="L-ASNase_gatD"/>
    <property type="match status" value="1"/>
</dbReference>
<dbReference type="PIRSF" id="PIRSF500176">
    <property type="entry name" value="L_ASNase"/>
    <property type="match status" value="1"/>
</dbReference>
<dbReference type="PRINTS" id="PR00139">
    <property type="entry name" value="ASNGLNASE"/>
</dbReference>
<dbReference type="SFLD" id="SFLDS00057">
    <property type="entry name" value="Glutaminase/Asparaginase"/>
    <property type="match status" value="1"/>
</dbReference>
<dbReference type="SMART" id="SM00870">
    <property type="entry name" value="Asparaginase"/>
    <property type="match status" value="1"/>
</dbReference>
<dbReference type="SUPFAM" id="SSF53774">
    <property type="entry name" value="Glutaminase/Asparaginase"/>
    <property type="match status" value="1"/>
</dbReference>
<dbReference type="PROSITE" id="PS00144">
    <property type="entry name" value="ASN_GLN_ASE_1"/>
    <property type="match status" value="1"/>
</dbReference>
<dbReference type="PROSITE" id="PS00917">
    <property type="entry name" value="ASN_GLN_ASE_2"/>
    <property type="match status" value="1"/>
</dbReference>
<dbReference type="PROSITE" id="PS51732">
    <property type="entry name" value="ASN_GLN_ASE_3"/>
    <property type="match status" value="1"/>
</dbReference>
<accession>Q5JIW4</accession>
<name>ASPG_THEKO</name>
<comment type="function">
    <text evidence="3 4">Catalyzes the hydrolysis of L-asparagine into L-aspartate and ammonia (PubMed:23648103, PubMed:24442710). Also displays D-asparaginase activity, which is about 50% of the L-asparaginase activity (PubMed:23648103). Does not exhibit glutaminase activity (PubMed:23648103).</text>
</comment>
<comment type="catalytic activity">
    <reaction evidence="3 4">
        <text>L-asparagine + H2O = L-aspartate + NH4(+)</text>
        <dbReference type="Rhea" id="RHEA:21016"/>
        <dbReference type="ChEBI" id="CHEBI:15377"/>
        <dbReference type="ChEBI" id="CHEBI:28938"/>
        <dbReference type="ChEBI" id="CHEBI:29991"/>
        <dbReference type="ChEBI" id="CHEBI:58048"/>
        <dbReference type="EC" id="3.5.1.1"/>
    </reaction>
</comment>
<comment type="activity regulation">
    <text evidence="3 4">Chohan et al. found that divalent metal ions and EDTA do not have any significant effect on enzyme activity, indicating that activity is independent of metal ions (PubMed:23648103). In another study, Hong et al. showed that activity is enhanced by Mg(2+), significantly inhibited by Co(2+) and Ni(2+), and moderately inhibited by Ca(2+), Cu(2+) and EDTA (PubMed:24442710). Unfolding studies suggest that urea cannot induce complete unfolding and inactivation of the enzyme even at a concentration 8 M (PubMed:23648103). However, in the presence of 4 M guanidine hydrochloride, the enzyme structure is unfolded with complete loss of enzyme activity (PubMed:23648103).</text>
</comment>
<comment type="biophysicochemical properties">
    <kinetics>
        <KM evidence="3">5.5 mM for L-asparagine</KM>
        <KM evidence="4">2.6 mM for L-asparagine</KM>
        <Vmax evidence="3">3300.0 umol/min/mg enzyme</Vmax>
        <Vmax evidence="4">1121.0 umol/min/mg enzyme</Vmax>
        <text evidence="3 4">kcat is 1397 sec(-1) (PubMed:23648103). kcat is 694 sec(-1) (PubMed:24442710).</text>
    </kinetics>
    <phDependence>
        <text evidence="3 4">Is active at a wide pH range (PubMed:23648103, PubMed:24442710). Optimum pH is 9.5 (PubMed:23648103). Optimum pH is 8.0 (PubMed:24442710).</text>
    </phDependence>
    <temperatureDependence>
        <text evidence="3 4">Displays activity at a broad temperature range and is highly thermostable (PubMed:23648103, PubMed:24442710). Optimum temperature is 85 degrees Celsius (PubMed:23648103). Optimum temperature is 90 degrees Celsius (PubMed:24442710). Displays high thermal stability at optimum temperature with an insignificant loss in enzymatic activity, retaining almost 90% of its activity over a time period of 32 hours (PubMed:24442710). Shows a half-life of 130 minutes at 85 degrees Celsius and 14 minutes in boiling water (PubMed:23648103).</text>
    </temperatureDependence>
</comment>
<comment type="subunit">
    <text evidence="3 4 5">Homodimer.</text>
</comment>
<comment type="domain">
    <text evidence="5">Each subunit consists of an N-terminal and a C-terminal alpha/beta domain connected by a short linker loop (PubMed:29095161). The N-terminal domain contains a highly flexible beta-hairpin which adopts 'open' and 'closed' conformations in different subunits (PubMed:29095161). The high content of arginine and salt-bridges as well as the low number of Cys and Ser likely contribute to the thermostability of the dimer (PubMed:29095161).</text>
</comment>
<comment type="biotechnology">
    <text evidence="3 4">L-asparaginases are widely used in fried and baked food industries to prevent formation of acrylamide, a neurotoxin formed by the reaction of asparagine with reducing sugars (PubMed:23648103, PubMed:24442710). TK1656 is highly active over a wide range of temperatures and pH, reflecting its potential in the food processing industry (PubMed:23648103, PubMed:24442710). In addition, its high thermal stability may facilitate its handling, storage and transportation (PubMed:24442710).</text>
</comment>
<comment type="similarity">
    <text evidence="9">Belongs to the asparaginase 1 family.</text>
</comment>
<evidence type="ECO:0000250" key="1">
    <source>
        <dbReference type="UniProtKB" id="Q8TZE8"/>
    </source>
</evidence>
<evidence type="ECO:0000255" key="2">
    <source>
        <dbReference type="PROSITE-ProRule" id="PRU01068"/>
    </source>
</evidence>
<evidence type="ECO:0000269" key="3">
    <source>
    </source>
</evidence>
<evidence type="ECO:0000269" key="4">
    <source>
    </source>
</evidence>
<evidence type="ECO:0000269" key="5">
    <source>
    </source>
</evidence>
<evidence type="ECO:0000303" key="6">
    <source>
    </source>
</evidence>
<evidence type="ECO:0000303" key="7">
    <source>
    </source>
</evidence>
<evidence type="ECO:0000303" key="8">
    <source>
    </source>
</evidence>
<evidence type="ECO:0000305" key="9"/>
<evidence type="ECO:0000312" key="10">
    <source>
        <dbReference type="EMBL" id="BAD85845.1"/>
    </source>
</evidence>
<evidence type="ECO:0007744" key="11">
    <source>
        <dbReference type="PDB" id="5OT0"/>
    </source>
</evidence>
<evidence type="ECO:0007829" key="12">
    <source>
        <dbReference type="PDB" id="5OT0"/>
    </source>
</evidence>
<feature type="chain" id="PRO_0000460242" description="L-asparaginase">
    <location>
        <begin position="1"/>
        <end position="328"/>
    </location>
</feature>
<feature type="domain" description="Asparaginase/glutaminase" evidence="2">
    <location>
        <begin position="1"/>
        <end position="320"/>
    </location>
</feature>
<feature type="active site" description="Nucleophile; O-isoaspartyl threonine intermediate" evidence="1">
    <location>
        <position position="11"/>
    </location>
</feature>
<feature type="active site" description="Charge relay system" evidence="1">
    <location>
        <position position="85"/>
    </location>
</feature>
<feature type="active site" description="Charge relay system" evidence="1">
    <location>
        <position position="86"/>
    </location>
</feature>
<feature type="active site" description="Charge relay system" evidence="1">
    <location>
        <position position="156"/>
    </location>
</feature>
<feature type="active site" description="Charge relay system" evidence="1">
    <location>
        <position position="274"/>
    </location>
</feature>
<feature type="binding site" evidence="1">
    <location>
        <position position="11"/>
    </location>
    <ligand>
        <name>L-aspartate</name>
        <dbReference type="ChEBI" id="CHEBI:29991"/>
    </ligand>
</feature>
<feature type="binding site" evidence="1">
    <location>
        <position position="53"/>
    </location>
    <ligand>
        <name>L-aspartate</name>
        <dbReference type="ChEBI" id="CHEBI:29991"/>
    </ligand>
</feature>
<feature type="binding site" evidence="1">
    <location>
        <position position="54"/>
    </location>
    <ligand>
        <name>L-aspartate</name>
        <dbReference type="ChEBI" id="CHEBI:29991"/>
    </ligand>
</feature>
<feature type="binding site" evidence="1">
    <location>
        <position position="85"/>
    </location>
    <ligand>
        <name>L-aspartate</name>
        <dbReference type="ChEBI" id="CHEBI:29991"/>
    </ligand>
</feature>
<feature type="binding site" evidence="1">
    <location>
        <position position="86"/>
    </location>
    <ligand>
        <name>L-aspartate</name>
        <dbReference type="ChEBI" id="CHEBI:29991"/>
    </ligand>
</feature>
<feature type="strand" evidence="12">
    <location>
        <begin position="2"/>
        <end position="10"/>
    </location>
</feature>
<feature type="helix" evidence="12">
    <location>
        <begin position="11"/>
        <end position="13"/>
    </location>
</feature>
<feature type="strand" evidence="12">
    <location>
        <begin position="15"/>
        <end position="17"/>
    </location>
</feature>
<feature type="strand" evidence="12">
    <location>
        <begin position="20"/>
        <end position="22"/>
    </location>
</feature>
<feature type="helix" evidence="12">
    <location>
        <begin position="27"/>
        <end position="33"/>
    </location>
</feature>
<feature type="strand" evidence="12">
    <location>
        <begin position="43"/>
        <end position="52"/>
    </location>
</feature>
<feature type="helix" evidence="12">
    <location>
        <begin position="54"/>
        <end position="56"/>
    </location>
</feature>
<feature type="helix" evidence="12">
    <location>
        <begin position="59"/>
        <end position="72"/>
    </location>
</feature>
<feature type="turn" evidence="12">
    <location>
        <begin position="73"/>
        <end position="75"/>
    </location>
</feature>
<feature type="strand" evidence="12">
    <location>
        <begin position="77"/>
        <end position="82"/>
    </location>
</feature>
<feature type="helix" evidence="12">
    <location>
        <begin position="88"/>
        <end position="98"/>
    </location>
</feature>
<feature type="strand" evidence="12">
    <location>
        <begin position="99"/>
        <end position="101"/>
    </location>
</feature>
<feature type="strand" evidence="12">
    <location>
        <begin position="103"/>
        <end position="109"/>
    </location>
</feature>
<feature type="helix" evidence="12">
    <location>
        <begin position="122"/>
        <end position="135"/>
    </location>
</feature>
<feature type="strand" evidence="12">
    <location>
        <begin position="138"/>
        <end position="144"/>
    </location>
</feature>
<feature type="strand" evidence="12">
    <location>
        <begin position="147"/>
        <end position="150"/>
    </location>
</feature>
<feature type="strand" evidence="12">
    <location>
        <begin position="153"/>
        <end position="156"/>
    </location>
</feature>
<feature type="strand" evidence="12">
    <location>
        <begin position="158"/>
        <end position="162"/>
    </location>
</feature>
<feature type="strand" evidence="12">
    <location>
        <begin position="165"/>
        <end position="167"/>
    </location>
</feature>
<feature type="strand" evidence="12">
    <location>
        <begin position="174"/>
        <end position="177"/>
    </location>
</feature>
<feature type="strand" evidence="12">
    <location>
        <begin position="180"/>
        <end position="184"/>
    </location>
</feature>
<feature type="strand" evidence="12">
    <location>
        <begin position="204"/>
        <end position="208"/>
    </location>
</feature>
<feature type="helix" evidence="12">
    <location>
        <begin position="215"/>
        <end position="222"/>
    </location>
</feature>
<feature type="strand" evidence="12">
    <location>
        <begin position="226"/>
        <end position="233"/>
    </location>
</feature>
<feature type="strand" evidence="12">
    <location>
        <begin position="241"/>
        <end position="243"/>
    </location>
</feature>
<feature type="helix" evidence="12">
    <location>
        <begin position="245"/>
        <end position="255"/>
    </location>
</feature>
<feature type="strand" evidence="12">
    <location>
        <begin position="258"/>
        <end position="267"/>
    </location>
</feature>
<feature type="helix" evidence="12">
    <location>
        <begin position="275"/>
        <end position="282"/>
    </location>
</feature>
<feature type="helix" evidence="12">
    <location>
        <begin position="293"/>
        <end position="306"/>
    </location>
</feature>
<feature type="helix" evidence="12">
    <location>
        <begin position="310"/>
        <end position="318"/>
    </location>
</feature>
<feature type="strand" evidence="12">
    <location>
        <begin position="321"/>
        <end position="323"/>
    </location>
</feature>
<gene>
    <name evidence="10" type="ordered locus">TK1656</name>
</gene>
<organism>
    <name type="scientific">Thermococcus kodakarensis (strain ATCC BAA-918 / JCM 12380 / KOD1)</name>
    <name type="common">Pyrococcus kodakaraensis (strain KOD1)</name>
    <dbReference type="NCBI Taxonomy" id="69014"/>
    <lineage>
        <taxon>Archaea</taxon>
        <taxon>Methanobacteriati</taxon>
        <taxon>Methanobacteriota</taxon>
        <taxon>Thermococci</taxon>
        <taxon>Thermococcales</taxon>
        <taxon>Thermococcaceae</taxon>
        <taxon>Thermococcus</taxon>
    </lineage>
</organism>
<reference key="1">
    <citation type="journal article" date="2005" name="Genome Res.">
        <title>Complete genome sequence of the hyperthermophilic archaeon Thermococcus kodakaraensis KOD1 and comparison with Pyrococcus genomes.</title>
        <authorList>
            <person name="Fukui T."/>
            <person name="Atomi H."/>
            <person name="Kanai T."/>
            <person name="Matsumi R."/>
            <person name="Fujiwara S."/>
            <person name="Imanaka T."/>
        </authorList>
    </citation>
    <scope>NUCLEOTIDE SEQUENCE [LARGE SCALE GENOMIC DNA]</scope>
    <source>
        <strain>ATCC BAA-918 / JCM 12380 / KOD1</strain>
    </source>
</reference>
<reference key="2">
    <citation type="journal article" date="2013" name="J. Biosci. Bioeng.">
        <title>TK1656, a thermostable L-asparaginase from Thermococcus kodakaraensis, exhibiting highest ever reported enzyme activity.</title>
        <authorList>
            <person name="Chohan S.M."/>
            <person name="Rashid N."/>
        </authorList>
    </citation>
    <scope>FUNCTION</scope>
    <scope>CATALYTIC ACTIVITY</scope>
    <scope>ACTIVITY REGULATION</scope>
    <scope>BIOPHYSICOCHEMICAL PROPERTIES</scope>
    <scope>SUBUNIT</scope>
    <scope>BIOTECHNOLOGY</scope>
    <source>
        <strain>ATCC BAA-918 / JCM 12380 / KOD1</strain>
    </source>
</reference>
<reference key="3">
    <citation type="journal article" date="2014" name="J. Basic Microbiol.">
        <title>Cloning, expression, and characterization of thermophilic L-asparaginase from Thermococcus kodakarensis KOD1.</title>
        <authorList>
            <person name="Hong S.J."/>
            <person name="Lee Y.H."/>
            <person name="Khan A.R."/>
            <person name="Ullah I."/>
            <person name="Lee C."/>
            <person name="Park C.K."/>
            <person name="Shin J.H."/>
        </authorList>
    </citation>
    <scope>FUNCTION</scope>
    <scope>CATALYTIC ACTIVITY</scope>
    <scope>ACTIVITY REGULATION</scope>
    <scope>BIOPHYSICOCHEMICAL PROPERTIES</scope>
    <scope>SUBUNIT</scope>
    <scope>BIOTECHNOLOGY</scope>
    <source>
        <strain>ATCC BAA-918 / JCM 12380 / KOD1</strain>
    </source>
</reference>
<reference evidence="11" key="4">
    <citation type="journal article" date="2017" name="Acta Crystallogr. D Struct. Biol.">
        <title>Structure and function of the thermostable L-asparaginase from Thermococcus kodakarensis.</title>
        <authorList>
            <person name="Guo J."/>
            <person name="Coker A.R."/>
            <person name="Wood S.P."/>
            <person name="Cooper J.B."/>
            <person name="Chohan S.M."/>
            <person name="Rashid N."/>
            <person name="Akhtar M."/>
        </authorList>
    </citation>
    <scope>X-RAY CRYSTALLOGRAPHY (2.18 ANGSTROMS)</scope>
    <scope>SUBUNIT</scope>
    <scope>DOMAIN</scope>
    <source>
        <strain>ATCC BAA-918 / JCM 12380 / KOD1</strain>
    </source>
</reference>
<keyword id="KW-0002">3D-structure</keyword>
<keyword id="KW-0378">Hydrolase</keyword>
<keyword id="KW-1185">Reference proteome</keyword>
<sequence length="328" mass="35675">MKLLVLGTGGTIASAKTEMGYKAALSADDILQLAGIRREDGAKIETRDILNLDSTLIQPEDWVTIGRAVFEAFDEYDGIVITHGTDTLAYTSSALSFMIRNPPIPVVLTGSMLPITEPNSDAPRNLRTALTFARKGFPGIYVAFMDKIMLGTRVSKVHSLGLNAFQSINYPDIAYVKGDEVLVRHKPRIGNGEPLFDPELDPNVVHIRLTPGLSPEVLRAVARATDGIVLEGYGAGGIPYRGRNLLEVVSETAREKPVVMTTQALYGGVDLTRYEVGRRALEAGVIPAGDMTKEATLTKLMWALGHTRDLEEIRKIMERNIAGEITGS</sequence>
<proteinExistence type="evidence at protein level"/>